<evidence type="ECO:0000255" key="1">
    <source>
        <dbReference type="HAMAP-Rule" id="MF_00318"/>
    </source>
</evidence>
<accession>Q1ISS7</accession>
<comment type="function">
    <text evidence="1">Catalyzes the reversible conversion of 2-phosphoglycerate (2-PG) into phosphoenolpyruvate (PEP). It is essential for the degradation of carbohydrates via glycolysis.</text>
</comment>
<comment type="catalytic activity">
    <reaction evidence="1">
        <text>(2R)-2-phosphoglycerate = phosphoenolpyruvate + H2O</text>
        <dbReference type="Rhea" id="RHEA:10164"/>
        <dbReference type="ChEBI" id="CHEBI:15377"/>
        <dbReference type="ChEBI" id="CHEBI:58289"/>
        <dbReference type="ChEBI" id="CHEBI:58702"/>
        <dbReference type="EC" id="4.2.1.11"/>
    </reaction>
</comment>
<comment type="cofactor">
    <cofactor evidence="1">
        <name>Mg(2+)</name>
        <dbReference type="ChEBI" id="CHEBI:18420"/>
    </cofactor>
    <text evidence="1">Binds a second Mg(2+) ion via substrate during catalysis.</text>
</comment>
<comment type="pathway">
    <text evidence="1">Carbohydrate degradation; glycolysis; pyruvate from D-glyceraldehyde 3-phosphate: step 4/5.</text>
</comment>
<comment type="subcellular location">
    <subcellularLocation>
        <location evidence="1">Cytoplasm</location>
    </subcellularLocation>
    <subcellularLocation>
        <location evidence="1">Secreted</location>
    </subcellularLocation>
    <subcellularLocation>
        <location evidence="1">Cell surface</location>
    </subcellularLocation>
    <text evidence="1">Fractions of enolase are present in both the cytoplasm and on the cell surface.</text>
</comment>
<comment type="similarity">
    <text evidence="1">Belongs to the enolase family.</text>
</comment>
<dbReference type="EC" id="4.2.1.11" evidence="1"/>
<dbReference type="EMBL" id="CP000360">
    <property type="protein sequence ID" value="ABF40073.1"/>
    <property type="molecule type" value="Genomic_DNA"/>
</dbReference>
<dbReference type="RefSeq" id="WP_011521875.1">
    <property type="nucleotide sequence ID" value="NC_008009.1"/>
</dbReference>
<dbReference type="SMR" id="Q1ISS7"/>
<dbReference type="STRING" id="204669.Acid345_1070"/>
<dbReference type="EnsemblBacteria" id="ABF40073">
    <property type="protein sequence ID" value="ABF40073"/>
    <property type="gene ID" value="Acid345_1070"/>
</dbReference>
<dbReference type="KEGG" id="aba:Acid345_1070"/>
<dbReference type="eggNOG" id="COG0148">
    <property type="taxonomic scope" value="Bacteria"/>
</dbReference>
<dbReference type="HOGENOM" id="CLU_031223_2_1_0"/>
<dbReference type="OrthoDB" id="9804716at2"/>
<dbReference type="UniPathway" id="UPA00109">
    <property type="reaction ID" value="UER00187"/>
</dbReference>
<dbReference type="Proteomes" id="UP000002432">
    <property type="component" value="Chromosome"/>
</dbReference>
<dbReference type="GO" id="GO:0009986">
    <property type="term" value="C:cell surface"/>
    <property type="evidence" value="ECO:0007669"/>
    <property type="project" value="UniProtKB-SubCell"/>
</dbReference>
<dbReference type="GO" id="GO:0005576">
    <property type="term" value="C:extracellular region"/>
    <property type="evidence" value="ECO:0007669"/>
    <property type="project" value="UniProtKB-SubCell"/>
</dbReference>
<dbReference type="GO" id="GO:0000015">
    <property type="term" value="C:phosphopyruvate hydratase complex"/>
    <property type="evidence" value="ECO:0007669"/>
    <property type="project" value="InterPro"/>
</dbReference>
<dbReference type="GO" id="GO:0000287">
    <property type="term" value="F:magnesium ion binding"/>
    <property type="evidence" value="ECO:0007669"/>
    <property type="project" value="UniProtKB-UniRule"/>
</dbReference>
<dbReference type="GO" id="GO:0004634">
    <property type="term" value="F:phosphopyruvate hydratase activity"/>
    <property type="evidence" value="ECO:0007669"/>
    <property type="project" value="UniProtKB-UniRule"/>
</dbReference>
<dbReference type="GO" id="GO:0006096">
    <property type="term" value="P:glycolytic process"/>
    <property type="evidence" value="ECO:0007669"/>
    <property type="project" value="UniProtKB-UniRule"/>
</dbReference>
<dbReference type="CDD" id="cd03313">
    <property type="entry name" value="enolase"/>
    <property type="match status" value="1"/>
</dbReference>
<dbReference type="FunFam" id="3.20.20.120:FF:000001">
    <property type="entry name" value="Enolase"/>
    <property type="match status" value="1"/>
</dbReference>
<dbReference type="FunFam" id="3.30.390.10:FF:000001">
    <property type="entry name" value="Enolase"/>
    <property type="match status" value="1"/>
</dbReference>
<dbReference type="Gene3D" id="3.20.20.120">
    <property type="entry name" value="Enolase-like C-terminal domain"/>
    <property type="match status" value="1"/>
</dbReference>
<dbReference type="Gene3D" id="3.30.390.10">
    <property type="entry name" value="Enolase-like, N-terminal domain"/>
    <property type="match status" value="1"/>
</dbReference>
<dbReference type="HAMAP" id="MF_00318">
    <property type="entry name" value="Enolase"/>
    <property type="match status" value="1"/>
</dbReference>
<dbReference type="InterPro" id="IPR000941">
    <property type="entry name" value="Enolase"/>
</dbReference>
<dbReference type="InterPro" id="IPR036849">
    <property type="entry name" value="Enolase-like_C_sf"/>
</dbReference>
<dbReference type="InterPro" id="IPR029017">
    <property type="entry name" value="Enolase-like_N"/>
</dbReference>
<dbReference type="InterPro" id="IPR020810">
    <property type="entry name" value="Enolase_C"/>
</dbReference>
<dbReference type="InterPro" id="IPR020809">
    <property type="entry name" value="Enolase_CS"/>
</dbReference>
<dbReference type="InterPro" id="IPR020811">
    <property type="entry name" value="Enolase_N"/>
</dbReference>
<dbReference type="NCBIfam" id="TIGR01060">
    <property type="entry name" value="eno"/>
    <property type="match status" value="1"/>
</dbReference>
<dbReference type="PANTHER" id="PTHR11902">
    <property type="entry name" value="ENOLASE"/>
    <property type="match status" value="1"/>
</dbReference>
<dbReference type="PANTHER" id="PTHR11902:SF1">
    <property type="entry name" value="ENOLASE"/>
    <property type="match status" value="1"/>
</dbReference>
<dbReference type="Pfam" id="PF00113">
    <property type="entry name" value="Enolase_C"/>
    <property type="match status" value="1"/>
</dbReference>
<dbReference type="Pfam" id="PF03952">
    <property type="entry name" value="Enolase_N"/>
    <property type="match status" value="1"/>
</dbReference>
<dbReference type="PIRSF" id="PIRSF001400">
    <property type="entry name" value="Enolase"/>
    <property type="match status" value="1"/>
</dbReference>
<dbReference type="PRINTS" id="PR00148">
    <property type="entry name" value="ENOLASE"/>
</dbReference>
<dbReference type="SFLD" id="SFLDF00002">
    <property type="entry name" value="enolase"/>
    <property type="match status" value="1"/>
</dbReference>
<dbReference type="SFLD" id="SFLDG00178">
    <property type="entry name" value="enolase"/>
    <property type="match status" value="1"/>
</dbReference>
<dbReference type="SMART" id="SM01192">
    <property type="entry name" value="Enolase_C"/>
    <property type="match status" value="1"/>
</dbReference>
<dbReference type="SMART" id="SM01193">
    <property type="entry name" value="Enolase_N"/>
    <property type="match status" value="1"/>
</dbReference>
<dbReference type="SUPFAM" id="SSF51604">
    <property type="entry name" value="Enolase C-terminal domain-like"/>
    <property type="match status" value="1"/>
</dbReference>
<dbReference type="SUPFAM" id="SSF54826">
    <property type="entry name" value="Enolase N-terminal domain-like"/>
    <property type="match status" value="1"/>
</dbReference>
<dbReference type="PROSITE" id="PS00164">
    <property type="entry name" value="ENOLASE"/>
    <property type="match status" value="1"/>
</dbReference>
<sequence length="433" mass="46524">MFDITLVHAREILDSRGNPTVEAEVTLSGGAVGRAAVPSGASTGEHEAVELRDGDNARYLGKGVLKAVENVEGEIAQALGGMDASQQRDIDMRMLDLDGTENKGRLGANAILAVSMASARAVANQLDIPLYRYLGGVNGNILPVPMMNILNGGAHADNNVDFQEFMAMPVGAESFSEALRWGAEVFHTLKGVLKKRGYNTAVGDEGGFAPSLKSNVEAIEVILEAIQQAGYTPGEQIAIALDPAASEFFKDGKYIFKKSDKSEKTSEQMVRWWSDWANKYPIVSIEDGLAEDDWEGWKLLTDELGDKIQLVGDDLFVTNPERLARGIDNGVANSILIKVNQIGTLSETLDAIEMARRNGYTAVISHRSGETEDTFIADLAVATGAGQIKTGSASRTDRVAKYNQLLRIEEQLGAGARFLGIGALNYDGDLSAE</sequence>
<organism>
    <name type="scientific">Koribacter versatilis (strain Ellin345)</name>
    <dbReference type="NCBI Taxonomy" id="204669"/>
    <lineage>
        <taxon>Bacteria</taxon>
        <taxon>Pseudomonadati</taxon>
        <taxon>Acidobacteriota</taxon>
        <taxon>Terriglobia</taxon>
        <taxon>Terriglobales</taxon>
        <taxon>Candidatus Korobacteraceae</taxon>
        <taxon>Candidatus Korobacter</taxon>
    </lineage>
</organism>
<protein>
    <recommendedName>
        <fullName evidence="1">Enolase</fullName>
        <ecNumber evidence="1">4.2.1.11</ecNumber>
    </recommendedName>
    <alternativeName>
        <fullName evidence="1">2-phospho-D-glycerate hydro-lyase</fullName>
    </alternativeName>
    <alternativeName>
        <fullName evidence="1">2-phosphoglycerate dehydratase</fullName>
    </alternativeName>
</protein>
<keyword id="KW-0963">Cytoplasm</keyword>
<keyword id="KW-0324">Glycolysis</keyword>
<keyword id="KW-0456">Lyase</keyword>
<keyword id="KW-0460">Magnesium</keyword>
<keyword id="KW-0479">Metal-binding</keyword>
<keyword id="KW-1185">Reference proteome</keyword>
<keyword id="KW-0964">Secreted</keyword>
<reference key="1">
    <citation type="journal article" date="2009" name="Appl. Environ. Microbiol.">
        <title>Three genomes from the phylum Acidobacteria provide insight into the lifestyles of these microorganisms in soils.</title>
        <authorList>
            <person name="Ward N.L."/>
            <person name="Challacombe J.F."/>
            <person name="Janssen P.H."/>
            <person name="Henrissat B."/>
            <person name="Coutinho P.M."/>
            <person name="Wu M."/>
            <person name="Xie G."/>
            <person name="Haft D.H."/>
            <person name="Sait M."/>
            <person name="Badger J."/>
            <person name="Barabote R.D."/>
            <person name="Bradley B."/>
            <person name="Brettin T.S."/>
            <person name="Brinkac L.M."/>
            <person name="Bruce D."/>
            <person name="Creasy T."/>
            <person name="Daugherty S.C."/>
            <person name="Davidsen T.M."/>
            <person name="DeBoy R.T."/>
            <person name="Detter J.C."/>
            <person name="Dodson R.J."/>
            <person name="Durkin A.S."/>
            <person name="Ganapathy A."/>
            <person name="Gwinn-Giglio M."/>
            <person name="Han C.S."/>
            <person name="Khouri H."/>
            <person name="Kiss H."/>
            <person name="Kothari S.P."/>
            <person name="Madupu R."/>
            <person name="Nelson K.E."/>
            <person name="Nelson W.C."/>
            <person name="Paulsen I."/>
            <person name="Penn K."/>
            <person name="Ren Q."/>
            <person name="Rosovitz M.J."/>
            <person name="Selengut J.D."/>
            <person name="Shrivastava S."/>
            <person name="Sullivan S.A."/>
            <person name="Tapia R."/>
            <person name="Thompson L.S."/>
            <person name="Watkins K.L."/>
            <person name="Yang Q."/>
            <person name="Yu C."/>
            <person name="Zafar N."/>
            <person name="Zhou L."/>
            <person name="Kuske C.R."/>
        </authorList>
    </citation>
    <scope>NUCLEOTIDE SEQUENCE [LARGE SCALE GENOMIC DNA]</scope>
    <source>
        <strain>Ellin345</strain>
    </source>
</reference>
<proteinExistence type="inferred from homology"/>
<gene>
    <name evidence="1" type="primary">eno</name>
    <name type="ordered locus">Acid345_1070</name>
</gene>
<feature type="chain" id="PRO_0000266991" description="Enolase">
    <location>
        <begin position="1"/>
        <end position="433"/>
    </location>
</feature>
<feature type="active site" description="Proton donor" evidence="1">
    <location>
        <position position="205"/>
    </location>
</feature>
<feature type="active site" description="Proton acceptor" evidence="1">
    <location>
        <position position="338"/>
    </location>
</feature>
<feature type="binding site" evidence="1">
    <location>
        <position position="163"/>
    </location>
    <ligand>
        <name>(2R)-2-phosphoglycerate</name>
        <dbReference type="ChEBI" id="CHEBI:58289"/>
    </ligand>
</feature>
<feature type="binding site" evidence="1">
    <location>
        <position position="242"/>
    </location>
    <ligand>
        <name>Mg(2+)</name>
        <dbReference type="ChEBI" id="CHEBI:18420"/>
    </ligand>
</feature>
<feature type="binding site" evidence="1">
    <location>
        <position position="286"/>
    </location>
    <ligand>
        <name>Mg(2+)</name>
        <dbReference type="ChEBI" id="CHEBI:18420"/>
    </ligand>
</feature>
<feature type="binding site" evidence="1">
    <location>
        <position position="313"/>
    </location>
    <ligand>
        <name>Mg(2+)</name>
        <dbReference type="ChEBI" id="CHEBI:18420"/>
    </ligand>
</feature>
<feature type="binding site" evidence="1">
    <location>
        <position position="338"/>
    </location>
    <ligand>
        <name>(2R)-2-phosphoglycerate</name>
        <dbReference type="ChEBI" id="CHEBI:58289"/>
    </ligand>
</feature>
<feature type="binding site" evidence="1">
    <location>
        <position position="367"/>
    </location>
    <ligand>
        <name>(2R)-2-phosphoglycerate</name>
        <dbReference type="ChEBI" id="CHEBI:58289"/>
    </ligand>
</feature>
<feature type="binding site" evidence="1">
    <location>
        <position position="368"/>
    </location>
    <ligand>
        <name>(2R)-2-phosphoglycerate</name>
        <dbReference type="ChEBI" id="CHEBI:58289"/>
    </ligand>
</feature>
<feature type="binding site" evidence="1">
    <location>
        <position position="389"/>
    </location>
    <ligand>
        <name>(2R)-2-phosphoglycerate</name>
        <dbReference type="ChEBI" id="CHEBI:58289"/>
    </ligand>
</feature>
<name>ENO_KORVE</name>